<evidence type="ECO:0000255" key="1">
    <source>
        <dbReference type="HAMAP-Rule" id="MF_00473"/>
    </source>
</evidence>
<name>G6PI_LACGA</name>
<dbReference type="EC" id="5.3.1.9" evidence="1"/>
<dbReference type="EMBL" id="CP000413">
    <property type="protein sequence ID" value="ABJ60622.1"/>
    <property type="molecule type" value="Genomic_DNA"/>
</dbReference>
<dbReference type="RefSeq" id="WP_003647059.1">
    <property type="nucleotide sequence ID" value="NZ_WBMG01000002.1"/>
</dbReference>
<dbReference type="SMR" id="Q042K0"/>
<dbReference type="GeneID" id="29638653"/>
<dbReference type="KEGG" id="lga:LGAS_1256"/>
<dbReference type="HOGENOM" id="CLU_037303_0_1_9"/>
<dbReference type="BioCyc" id="LGAS324831:G1G6Y-1252-MONOMER"/>
<dbReference type="UniPathway" id="UPA00109">
    <property type="reaction ID" value="UER00181"/>
</dbReference>
<dbReference type="UniPathway" id="UPA00138"/>
<dbReference type="Proteomes" id="UP000000664">
    <property type="component" value="Chromosome"/>
</dbReference>
<dbReference type="GO" id="GO:0005829">
    <property type="term" value="C:cytosol"/>
    <property type="evidence" value="ECO:0007669"/>
    <property type="project" value="TreeGrafter"/>
</dbReference>
<dbReference type="GO" id="GO:0097367">
    <property type="term" value="F:carbohydrate derivative binding"/>
    <property type="evidence" value="ECO:0007669"/>
    <property type="project" value="InterPro"/>
</dbReference>
<dbReference type="GO" id="GO:0004347">
    <property type="term" value="F:glucose-6-phosphate isomerase activity"/>
    <property type="evidence" value="ECO:0007669"/>
    <property type="project" value="UniProtKB-UniRule"/>
</dbReference>
<dbReference type="GO" id="GO:0048029">
    <property type="term" value="F:monosaccharide binding"/>
    <property type="evidence" value="ECO:0007669"/>
    <property type="project" value="TreeGrafter"/>
</dbReference>
<dbReference type="GO" id="GO:0006094">
    <property type="term" value="P:gluconeogenesis"/>
    <property type="evidence" value="ECO:0007669"/>
    <property type="project" value="UniProtKB-UniRule"/>
</dbReference>
<dbReference type="GO" id="GO:0051156">
    <property type="term" value="P:glucose 6-phosphate metabolic process"/>
    <property type="evidence" value="ECO:0007669"/>
    <property type="project" value="TreeGrafter"/>
</dbReference>
<dbReference type="GO" id="GO:0006096">
    <property type="term" value="P:glycolytic process"/>
    <property type="evidence" value="ECO:0007669"/>
    <property type="project" value="UniProtKB-UniRule"/>
</dbReference>
<dbReference type="CDD" id="cd05015">
    <property type="entry name" value="SIS_PGI_1"/>
    <property type="match status" value="1"/>
</dbReference>
<dbReference type="CDD" id="cd05016">
    <property type="entry name" value="SIS_PGI_2"/>
    <property type="match status" value="1"/>
</dbReference>
<dbReference type="FunFam" id="3.40.50.10490:FF:000015">
    <property type="entry name" value="Glucose-6-phosphate isomerase"/>
    <property type="match status" value="1"/>
</dbReference>
<dbReference type="FunFam" id="3.40.50.10490:FF:000016">
    <property type="entry name" value="Glucose-6-phosphate isomerase"/>
    <property type="match status" value="1"/>
</dbReference>
<dbReference type="Gene3D" id="3.40.50.10490">
    <property type="entry name" value="Glucose-6-phosphate isomerase like protein, domain 1"/>
    <property type="match status" value="3"/>
</dbReference>
<dbReference type="HAMAP" id="MF_00473">
    <property type="entry name" value="G6P_isomerase"/>
    <property type="match status" value="1"/>
</dbReference>
<dbReference type="InterPro" id="IPR001672">
    <property type="entry name" value="G6P_Isomerase"/>
</dbReference>
<dbReference type="InterPro" id="IPR018189">
    <property type="entry name" value="Phosphoglucose_isomerase_CS"/>
</dbReference>
<dbReference type="InterPro" id="IPR046348">
    <property type="entry name" value="SIS_dom_sf"/>
</dbReference>
<dbReference type="InterPro" id="IPR035476">
    <property type="entry name" value="SIS_PGI_1"/>
</dbReference>
<dbReference type="InterPro" id="IPR035482">
    <property type="entry name" value="SIS_PGI_2"/>
</dbReference>
<dbReference type="NCBIfam" id="NF010697">
    <property type="entry name" value="PRK14097.1"/>
    <property type="match status" value="1"/>
</dbReference>
<dbReference type="PANTHER" id="PTHR11469">
    <property type="entry name" value="GLUCOSE-6-PHOSPHATE ISOMERASE"/>
    <property type="match status" value="1"/>
</dbReference>
<dbReference type="PANTHER" id="PTHR11469:SF1">
    <property type="entry name" value="GLUCOSE-6-PHOSPHATE ISOMERASE"/>
    <property type="match status" value="1"/>
</dbReference>
<dbReference type="Pfam" id="PF00342">
    <property type="entry name" value="PGI"/>
    <property type="match status" value="1"/>
</dbReference>
<dbReference type="PRINTS" id="PR00662">
    <property type="entry name" value="G6PISOMERASE"/>
</dbReference>
<dbReference type="SUPFAM" id="SSF53697">
    <property type="entry name" value="SIS domain"/>
    <property type="match status" value="1"/>
</dbReference>
<dbReference type="PROSITE" id="PS00765">
    <property type="entry name" value="P_GLUCOSE_ISOMERASE_1"/>
    <property type="match status" value="1"/>
</dbReference>
<dbReference type="PROSITE" id="PS00174">
    <property type="entry name" value="P_GLUCOSE_ISOMERASE_2"/>
    <property type="match status" value="1"/>
</dbReference>
<dbReference type="PROSITE" id="PS51463">
    <property type="entry name" value="P_GLUCOSE_ISOMERASE_3"/>
    <property type="match status" value="1"/>
</dbReference>
<protein>
    <recommendedName>
        <fullName evidence="1">Glucose-6-phosphate isomerase</fullName>
        <shortName evidence="1">GPI</shortName>
        <ecNumber evidence="1">5.3.1.9</ecNumber>
    </recommendedName>
    <alternativeName>
        <fullName evidence="1">Phosphoglucose isomerase</fullName>
        <shortName evidence="1">PGI</shortName>
    </alternativeName>
    <alternativeName>
        <fullName evidence="1">Phosphohexose isomerase</fullName>
        <shortName evidence="1">PHI</shortName>
    </alternativeName>
</protein>
<proteinExistence type="inferred from homology"/>
<gene>
    <name evidence="1" type="primary">pgi</name>
    <name type="ordered locus">LGAS_1256</name>
</gene>
<reference key="1">
    <citation type="journal article" date="2006" name="Proc. Natl. Acad. Sci. U.S.A.">
        <title>Comparative genomics of the lactic acid bacteria.</title>
        <authorList>
            <person name="Makarova K.S."/>
            <person name="Slesarev A."/>
            <person name="Wolf Y.I."/>
            <person name="Sorokin A."/>
            <person name="Mirkin B."/>
            <person name="Koonin E.V."/>
            <person name="Pavlov A."/>
            <person name="Pavlova N."/>
            <person name="Karamychev V."/>
            <person name="Polouchine N."/>
            <person name="Shakhova V."/>
            <person name="Grigoriev I."/>
            <person name="Lou Y."/>
            <person name="Rohksar D."/>
            <person name="Lucas S."/>
            <person name="Huang K."/>
            <person name="Goodstein D.M."/>
            <person name="Hawkins T."/>
            <person name="Plengvidhya V."/>
            <person name="Welker D."/>
            <person name="Hughes J."/>
            <person name="Goh Y."/>
            <person name="Benson A."/>
            <person name="Baldwin K."/>
            <person name="Lee J.-H."/>
            <person name="Diaz-Muniz I."/>
            <person name="Dosti B."/>
            <person name="Smeianov V."/>
            <person name="Wechter W."/>
            <person name="Barabote R."/>
            <person name="Lorca G."/>
            <person name="Altermann E."/>
            <person name="Barrangou R."/>
            <person name="Ganesan B."/>
            <person name="Xie Y."/>
            <person name="Rawsthorne H."/>
            <person name="Tamir D."/>
            <person name="Parker C."/>
            <person name="Breidt F."/>
            <person name="Broadbent J.R."/>
            <person name="Hutkins R."/>
            <person name="O'Sullivan D."/>
            <person name="Steele J."/>
            <person name="Unlu G."/>
            <person name="Saier M.H. Jr."/>
            <person name="Klaenhammer T."/>
            <person name="Richardson P."/>
            <person name="Kozyavkin S."/>
            <person name="Weimer B.C."/>
            <person name="Mills D.A."/>
        </authorList>
    </citation>
    <scope>NUCLEOTIDE SEQUENCE [LARGE SCALE GENOMIC DNA]</scope>
    <source>
        <strain>ATCC 33323 / DSM 20243 / BCRC 14619 / CIP 102991 / JCM 1131 / KCTC 3163 / NCIMB 11718 / NCTC 13722 / AM63</strain>
    </source>
</reference>
<sequence length="447" mass="49857">MSKVVHFDASKLTPFVHENELKEMQAMVTAADQELREGTGAGSDFRGWIDLPINYDKDEFDRIKKAAKKIQNDSEVLVGIGIGGSYLGAQASIEFLNSSFYGREKEKYPTVVFCGNSLSGSYLYDLLEWLGDKDFSINIISKSGTTTEPSIAFRVLKDKLIKKYGKEEAAKRIYATTDRAKGALKTEADAEGYEEFVVPDDIGGRFSVLSAVGLLPIAVAGGDIDAMMKGAADARAAYTDPDVSKDNPYQYAALRNILYRKGYTTELLENYEPSLRMFGEWWKQLMGESEGKDQKGIYPSSANFTTDLHSLGQYIQEGRRNLMETVIRVESPEHDVTIPDDKENLDQLNFLSGKTMNYVNDRAYEGVVLAHTDGGVPVMTVDIENQSAHTLGYLIYWFELAVGISGYLNGINPFNQPGVESYKRNMFGLLNKPGYEDLHDDLTKRLK</sequence>
<accession>Q042K0</accession>
<feature type="chain" id="PRO_1000013979" description="Glucose-6-phosphate isomerase">
    <location>
        <begin position="1"/>
        <end position="447"/>
    </location>
</feature>
<feature type="active site" description="Proton donor" evidence="1">
    <location>
        <position position="288"/>
    </location>
</feature>
<feature type="active site" evidence="1">
    <location>
        <position position="309"/>
    </location>
</feature>
<feature type="active site" evidence="1">
    <location>
        <position position="423"/>
    </location>
</feature>
<comment type="function">
    <text evidence="1">Catalyzes the reversible isomerization of glucose-6-phosphate to fructose-6-phosphate.</text>
</comment>
<comment type="catalytic activity">
    <reaction evidence="1">
        <text>alpha-D-glucose 6-phosphate = beta-D-fructose 6-phosphate</text>
        <dbReference type="Rhea" id="RHEA:11816"/>
        <dbReference type="ChEBI" id="CHEBI:57634"/>
        <dbReference type="ChEBI" id="CHEBI:58225"/>
        <dbReference type="EC" id="5.3.1.9"/>
    </reaction>
</comment>
<comment type="pathway">
    <text evidence="1">Carbohydrate biosynthesis; gluconeogenesis.</text>
</comment>
<comment type="pathway">
    <text evidence="1">Carbohydrate degradation; glycolysis; D-glyceraldehyde 3-phosphate and glycerone phosphate from D-glucose: step 2/4.</text>
</comment>
<comment type="subcellular location">
    <subcellularLocation>
        <location evidence="1">Cytoplasm</location>
    </subcellularLocation>
</comment>
<comment type="similarity">
    <text evidence="1">Belongs to the GPI family.</text>
</comment>
<keyword id="KW-0963">Cytoplasm</keyword>
<keyword id="KW-0312">Gluconeogenesis</keyword>
<keyword id="KW-0324">Glycolysis</keyword>
<keyword id="KW-0413">Isomerase</keyword>
<organism>
    <name type="scientific">Lactobacillus gasseri (strain ATCC 33323 / DSM 20243 / BCRC 14619 / CIP 102991 / JCM 1131 / KCTC 3163 / NCIMB 11718 / NCTC 13722 / AM63)</name>
    <dbReference type="NCBI Taxonomy" id="324831"/>
    <lineage>
        <taxon>Bacteria</taxon>
        <taxon>Bacillati</taxon>
        <taxon>Bacillota</taxon>
        <taxon>Bacilli</taxon>
        <taxon>Lactobacillales</taxon>
        <taxon>Lactobacillaceae</taxon>
        <taxon>Lactobacillus</taxon>
    </lineage>
</organism>